<dbReference type="EC" id="1.1.1.37"/>
<dbReference type="GO" id="GO:0030060">
    <property type="term" value="F:L-malate dehydrogenase (NAD+) activity"/>
    <property type="evidence" value="ECO:0007669"/>
    <property type="project" value="UniProtKB-EC"/>
</dbReference>
<dbReference type="GO" id="GO:0006099">
    <property type="term" value="P:tricarboxylic acid cycle"/>
    <property type="evidence" value="ECO:0007669"/>
    <property type="project" value="UniProtKB-KW"/>
</dbReference>
<protein>
    <recommendedName>
        <fullName evidence="1">Malate dehydrogenase</fullName>
        <ecNumber>1.1.1.37</ecNumber>
    </recommendedName>
</protein>
<proteinExistence type="evidence at protein level"/>
<reference evidence="5" key="1">
    <citation type="journal article" date="2008" name="J. Proteomics">
        <title>A proteomics approach to identify proteins differentially expressed in Douglas-fir seedlings infected by Phellinus sulphurascens.</title>
        <authorList>
            <person name="Islam M.A."/>
            <person name="Sturrock R.N."/>
            <person name="Ekramoddoullah A.K.M."/>
        </authorList>
    </citation>
    <scope>IDENTIFICATION BY MASS SPECTROMETRY</scope>
</reference>
<comment type="catalytic activity">
    <reaction evidence="1 3">
        <text>(S)-malate + NAD(+) = oxaloacetate + NADH + H(+)</text>
        <dbReference type="Rhea" id="RHEA:21432"/>
        <dbReference type="ChEBI" id="CHEBI:15378"/>
        <dbReference type="ChEBI" id="CHEBI:15589"/>
        <dbReference type="ChEBI" id="CHEBI:16452"/>
        <dbReference type="ChEBI" id="CHEBI:57540"/>
        <dbReference type="ChEBI" id="CHEBI:57945"/>
        <dbReference type="EC" id="1.1.1.37"/>
    </reaction>
</comment>
<comment type="subunit">
    <text evidence="1">Homodimer.</text>
</comment>
<comment type="similarity">
    <text evidence="2">Belongs to the LDH/MDH superfamily. MDH type 1 family.</text>
</comment>
<feature type="chain" id="PRO_0000397957" description="Malate dehydrogenase">
    <location>
        <begin position="1" status="less than"/>
        <end position="23" status="greater than"/>
    </location>
</feature>
<feature type="binding site" evidence="1">
    <location>
        <position position="7"/>
    </location>
    <ligand>
        <name>NAD(+)</name>
        <dbReference type="ChEBI" id="CHEBI:57540"/>
    </ligand>
</feature>
<feature type="binding site" evidence="1 3">
    <location>
        <position position="23"/>
    </location>
    <ligand>
        <name>substrate</name>
    </ligand>
</feature>
<feature type="non-consecutive residues" evidence="4">
    <location>
        <begin position="12"/>
        <end position="13"/>
    </location>
</feature>
<feature type="non-terminal residue" evidence="4">
    <location>
        <position position="1"/>
    </location>
</feature>
<feature type="non-terminal residue" evidence="4">
    <location>
        <position position="23"/>
    </location>
</feature>
<sequence length="23" mass="2520">DDLFNINAGIVKLFGVTTLDVVR</sequence>
<keyword id="KW-0520">NAD</keyword>
<keyword id="KW-0560">Oxidoreductase</keyword>
<keyword id="KW-0816">Tricarboxylic acid cycle</keyword>
<organism>
    <name type="scientific">Pseudotsuga menziesii</name>
    <name type="common">Douglas-fir</name>
    <name type="synonym">Abies menziesii</name>
    <dbReference type="NCBI Taxonomy" id="3357"/>
    <lineage>
        <taxon>Eukaryota</taxon>
        <taxon>Viridiplantae</taxon>
        <taxon>Streptophyta</taxon>
        <taxon>Embryophyta</taxon>
        <taxon>Tracheophyta</taxon>
        <taxon>Spermatophyta</taxon>
        <taxon>Pinopsida</taxon>
        <taxon>Pinidae</taxon>
        <taxon>Conifers I</taxon>
        <taxon>Pinales</taxon>
        <taxon>Pinaceae</taxon>
        <taxon>Pseudotsuga</taxon>
    </lineage>
</organism>
<accession>P85920</accession>
<evidence type="ECO:0000250" key="1">
    <source>
        <dbReference type="UniProtKB" id="P61889"/>
    </source>
</evidence>
<evidence type="ECO:0000255" key="2"/>
<evidence type="ECO:0000255" key="3">
    <source>
        <dbReference type="PROSITE-ProRule" id="PRU10004"/>
    </source>
</evidence>
<evidence type="ECO:0000303" key="4">
    <source>
    </source>
</evidence>
<evidence type="ECO:0000305" key="5"/>
<name>MDH_PSEMZ</name>